<name>MHPB_AZOVD</name>
<keyword id="KW-0058">Aromatic hydrocarbons catabolism</keyword>
<keyword id="KW-0223">Dioxygenase</keyword>
<keyword id="KW-0408">Iron</keyword>
<keyword id="KW-0560">Oxidoreductase</keyword>
<organism>
    <name type="scientific">Azotobacter vinelandii (strain DJ / ATCC BAA-1303)</name>
    <dbReference type="NCBI Taxonomy" id="322710"/>
    <lineage>
        <taxon>Bacteria</taxon>
        <taxon>Pseudomonadati</taxon>
        <taxon>Pseudomonadota</taxon>
        <taxon>Gammaproteobacteria</taxon>
        <taxon>Pseudomonadales</taxon>
        <taxon>Pseudomonadaceae</taxon>
        <taxon>Azotobacter</taxon>
    </lineage>
</organism>
<feature type="chain" id="PRO_1000215852" description="2,3-dihydroxyphenylpropionate/2,3-dihydroxicinnamic acid 1,2-dioxygenase">
    <location>
        <begin position="1"/>
        <end position="312"/>
    </location>
</feature>
<feature type="active site" description="Proton donor" evidence="1">
    <location>
        <position position="115"/>
    </location>
</feature>
<feature type="active site" description="Proton acceptor" evidence="1">
    <location>
        <position position="179"/>
    </location>
</feature>
<protein>
    <recommendedName>
        <fullName evidence="1">2,3-dihydroxyphenylpropionate/2,3-dihydroxicinnamic acid 1,2-dioxygenase</fullName>
        <ecNumber evidence="1">1.13.11.16</ecNumber>
    </recommendedName>
    <alternativeName>
        <fullName evidence="1">3-carboxyethylcatechol 2,3-dioxygenase</fullName>
    </alternativeName>
</protein>
<accession>C1DRI2</accession>
<proteinExistence type="inferred from homology"/>
<gene>
    <name evidence="1" type="primary">mhpB</name>
    <name type="ordered locus">Avin_15050</name>
</gene>
<dbReference type="EC" id="1.13.11.16" evidence="1"/>
<dbReference type="EMBL" id="CP001157">
    <property type="protein sequence ID" value="ACO77720.1"/>
    <property type="molecule type" value="Genomic_DNA"/>
</dbReference>
<dbReference type="RefSeq" id="WP_012700136.1">
    <property type="nucleotide sequence ID" value="NC_012560.1"/>
</dbReference>
<dbReference type="SMR" id="C1DRI2"/>
<dbReference type="STRING" id="322710.Avin_15050"/>
<dbReference type="EnsemblBacteria" id="ACO77720">
    <property type="protein sequence ID" value="ACO77720"/>
    <property type="gene ID" value="Avin_15050"/>
</dbReference>
<dbReference type="GeneID" id="88184800"/>
<dbReference type="KEGG" id="avn:Avin_15050"/>
<dbReference type="eggNOG" id="COG1355">
    <property type="taxonomic scope" value="Bacteria"/>
</dbReference>
<dbReference type="HOGENOM" id="CLU_078149_0_0_6"/>
<dbReference type="OrthoDB" id="8673673at2"/>
<dbReference type="UniPathway" id="UPA00714"/>
<dbReference type="Proteomes" id="UP000002424">
    <property type="component" value="Chromosome"/>
</dbReference>
<dbReference type="GO" id="GO:0047070">
    <property type="term" value="F:3-carboxyethylcatechol 2,3-dioxygenase activity"/>
    <property type="evidence" value="ECO:0007669"/>
    <property type="project" value="UniProtKB-UniRule"/>
</dbReference>
<dbReference type="GO" id="GO:0008198">
    <property type="term" value="F:ferrous iron binding"/>
    <property type="evidence" value="ECO:0007669"/>
    <property type="project" value="InterPro"/>
</dbReference>
<dbReference type="GO" id="GO:0019380">
    <property type="term" value="P:3-phenylpropionate catabolic process"/>
    <property type="evidence" value="ECO:0007669"/>
    <property type="project" value="UniProtKB-UniRule"/>
</dbReference>
<dbReference type="CDD" id="cd07365">
    <property type="entry name" value="MhpB_like"/>
    <property type="match status" value="1"/>
</dbReference>
<dbReference type="Gene3D" id="3.40.830.10">
    <property type="entry name" value="LigB-like"/>
    <property type="match status" value="1"/>
</dbReference>
<dbReference type="HAMAP" id="MF_01653">
    <property type="entry name" value="MhpB"/>
    <property type="match status" value="1"/>
</dbReference>
<dbReference type="InterPro" id="IPR023789">
    <property type="entry name" value="DHPP/DHXA_dioxygenase"/>
</dbReference>
<dbReference type="InterPro" id="IPR004183">
    <property type="entry name" value="Xdiol_dOase_suB"/>
</dbReference>
<dbReference type="NCBIfam" id="NF009908">
    <property type="entry name" value="PRK13370.1-2"/>
    <property type="match status" value="1"/>
</dbReference>
<dbReference type="NCBIfam" id="NF009910">
    <property type="entry name" value="PRK13370.1-4"/>
    <property type="match status" value="1"/>
</dbReference>
<dbReference type="Pfam" id="PF02900">
    <property type="entry name" value="LigB"/>
    <property type="match status" value="1"/>
</dbReference>
<dbReference type="SUPFAM" id="SSF53213">
    <property type="entry name" value="LigB-like"/>
    <property type="match status" value="1"/>
</dbReference>
<comment type="function">
    <text evidence="1">Catalyzes the non-heme iron(II)-dependent oxidative cleavage of 2,3-dihydroxyphenylpropionic acid and 2,3-dihydroxicinnamic acid into 2-hydroxy-6-ketononadienedioate and 2-hydroxy-6-ketononatrienedioate, respectively.</text>
</comment>
<comment type="catalytic activity">
    <reaction evidence="1">
        <text>3-(2,3-dihydroxyphenyl)propanoate + O2 = (2Z,4E)-2-hydroxy-6-oxonona-2,4-dienedioate + H(+)</text>
        <dbReference type="Rhea" id="RHEA:23840"/>
        <dbReference type="ChEBI" id="CHEBI:15378"/>
        <dbReference type="ChEBI" id="CHEBI:15379"/>
        <dbReference type="ChEBI" id="CHEBI:46951"/>
        <dbReference type="ChEBI" id="CHEBI:66887"/>
        <dbReference type="EC" id="1.13.11.16"/>
    </reaction>
</comment>
<comment type="catalytic activity">
    <reaction evidence="1">
        <text>(2E)-3-(2,3-dihydroxyphenyl)prop-2-enoate + O2 = (2Z,4E,7E)-2-hydroxy-6-oxonona-2,4,7-trienedioate + H(+)</text>
        <dbReference type="Rhea" id="RHEA:25054"/>
        <dbReference type="ChEBI" id="CHEBI:15378"/>
        <dbReference type="ChEBI" id="CHEBI:15379"/>
        <dbReference type="ChEBI" id="CHEBI:58642"/>
        <dbReference type="ChEBI" id="CHEBI:66888"/>
        <dbReference type="EC" id="1.13.11.16"/>
    </reaction>
</comment>
<comment type="cofactor">
    <cofactor evidence="1">
        <name>Fe(2+)</name>
        <dbReference type="ChEBI" id="CHEBI:29033"/>
    </cofactor>
</comment>
<comment type="pathway">
    <text evidence="1">Aromatic compound metabolism; 3-phenylpropanoate degradation.</text>
</comment>
<comment type="subunit">
    <text evidence="1">Homotetramer.</text>
</comment>
<comment type="similarity">
    <text evidence="1">Belongs to the LigB/MhpB extradiol dioxygenase family.</text>
</comment>
<reference key="1">
    <citation type="journal article" date="2009" name="J. Bacteriol.">
        <title>Genome sequence of Azotobacter vinelandii, an obligate aerobe specialized to support diverse anaerobic metabolic processes.</title>
        <authorList>
            <person name="Setubal J.C."/>
            <person name="Dos Santos P."/>
            <person name="Goldman B.S."/>
            <person name="Ertesvaag H."/>
            <person name="Espin G."/>
            <person name="Rubio L.M."/>
            <person name="Valla S."/>
            <person name="Almeida N.F."/>
            <person name="Balasubramanian D."/>
            <person name="Cromes L."/>
            <person name="Curatti L."/>
            <person name="Du Z."/>
            <person name="Godsy E."/>
            <person name="Goodner B."/>
            <person name="Hellner-Burris K."/>
            <person name="Hernandez J.A."/>
            <person name="Houmiel K."/>
            <person name="Imperial J."/>
            <person name="Kennedy C."/>
            <person name="Larson T.J."/>
            <person name="Latreille P."/>
            <person name="Ligon L.S."/>
            <person name="Lu J."/>
            <person name="Maerk M."/>
            <person name="Miller N.M."/>
            <person name="Norton S."/>
            <person name="O'Carroll I.P."/>
            <person name="Paulsen I."/>
            <person name="Raulfs E.C."/>
            <person name="Roemer R."/>
            <person name="Rosser J."/>
            <person name="Segura D."/>
            <person name="Slater S."/>
            <person name="Stricklin S.L."/>
            <person name="Studholme D.J."/>
            <person name="Sun J."/>
            <person name="Viana C.J."/>
            <person name="Wallin E."/>
            <person name="Wang B."/>
            <person name="Wheeler C."/>
            <person name="Zhu H."/>
            <person name="Dean D.R."/>
            <person name="Dixon R."/>
            <person name="Wood D."/>
        </authorList>
    </citation>
    <scope>NUCLEOTIDE SEQUENCE [LARGE SCALE GENOMIC DNA]</scope>
    <source>
        <strain>DJ / ATCC BAA-1303</strain>
    </source>
</reference>
<sequence length="312" mass="33770">MTIKLKCLSHTPLRGLNDPGADVVAEVDAVLARSRAEVEAFDPELIVIFAPDHYNGLFYDLMPPFVIATAAESVADYGTLPGPLSIPRDLALDLTRHILDSGLDIALSHRLQVDHGCTQTLEELTGSLTRYPVIPIIINSVAPPFAPYRRIRKLGEAVGRFVASLGKRVLILGTGGLSHEPPVPLLSGAAEEIAEFLIAGRNPTPEARAARQARTIAAGKIYGTAESPLTPLNTDWDLAFIDLLVQGRLAEIDDFVVEEISTTAGRSTHEIRTWVAAFAALAAGGAYRARQDYYRPINEWIAGYGVVSAERR</sequence>
<evidence type="ECO:0000255" key="1">
    <source>
        <dbReference type="HAMAP-Rule" id="MF_01653"/>
    </source>
</evidence>